<proteinExistence type="inferred from homology"/>
<reference key="1">
    <citation type="journal article" date="2004" name="Proc. Natl. Acad. Sci. U.S.A.">
        <title>Genome sequence of Picrophilus torridus and its implications for life around pH 0.</title>
        <authorList>
            <person name="Fuetterer O."/>
            <person name="Angelov A."/>
            <person name="Liesegang H."/>
            <person name="Gottschalk G."/>
            <person name="Schleper C."/>
            <person name="Schepers B."/>
            <person name="Dock C."/>
            <person name="Antranikian G."/>
            <person name="Liebl W."/>
        </authorList>
    </citation>
    <scope>NUCLEOTIDE SEQUENCE [LARGE SCALE GENOMIC DNA]</scope>
    <source>
        <strain>ATCC 700027 / DSM 9790 / JCM 10055 / NBRC 100828 / KAW 2/3</strain>
    </source>
</reference>
<evidence type="ECO:0000255" key="1">
    <source>
        <dbReference type="HAMAP-Rule" id="MF_00408"/>
    </source>
</evidence>
<protein>
    <recommendedName>
        <fullName evidence="1">TATA-box-binding protein</fullName>
    </recommendedName>
    <alternativeName>
        <fullName evidence="1">Box A-binding protein</fullName>
        <shortName evidence="1">BAP</shortName>
    </alternativeName>
    <alternativeName>
        <fullName evidence="1">TATA sequence-binding protein</fullName>
        <shortName evidence="1">TBP</shortName>
    </alternativeName>
    <alternativeName>
        <fullName evidence="1">TATA-box factor</fullName>
    </alternativeName>
</protein>
<keyword id="KW-0238">DNA-binding</keyword>
<keyword id="KW-0677">Repeat</keyword>
<keyword id="KW-0804">Transcription</keyword>
<keyword id="KW-0805">Transcription regulation</keyword>
<gene>
    <name evidence="1" type="primary">tbp</name>
    <name type="ordered locus">PTO0506</name>
</gene>
<accession>Q6L1R1</accession>
<sequence>MSEMEKITIENIVASTSLAEHLDLSKIALALEGSEYEPEQFPGLIYRLQEPKTAVLIFRSGKVNCTGAKNLDDVKKTIDIIIDKLKKADIEVYDNPDIIVQNIVAVYDLESNLNLTDIAMSLGLENVEYEPEQFPGLVYRVEEPKVVLLLFGSGKVVCTGAKEENEIEQAVIKVKKDLQKVGLI</sequence>
<organism>
    <name type="scientific">Picrophilus torridus (strain ATCC 700027 / DSM 9790 / JCM 10055 / NBRC 100828 / KAW 2/3)</name>
    <dbReference type="NCBI Taxonomy" id="1122961"/>
    <lineage>
        <taxon>Archaea</taxon>
        <taxon>Methanobacteriati</taxon>
        <taxon>Thermoplasmatota</taxon>
        <taxon>Thermoplasmata</taxon>
        <taxon>Thermoplasmatales</taxon>
        <taxon>Picrophilaceae</taxon>
        <taxon>Picrophilus</taxon>
    </lineage>
</organism>
<name>TBP_PICTO</name>
<feature type="chain" id="PRO_0000154016" description="TATA-box-binding protein">
    <location>
        <begin position="1"/>
        <end position="184"/>
    </location>
</feature>
<feature type="repeat" description="1">
    <location>
        <begin position="9"/>
        <end position="85"/>
    </location>
</feature>
<feature type="repeat" description="2">
    <location>
        <begin position="100"/>
        <end position="178"/>
    </location>
</feature>
<comment type="function">
    <text evidence="1">General factor that plays a role in the activation of archaeal genes transcribed by RNA polymerase. Binds specifically to the TATA box promoter element which lies close to the position of transcription initiation.</text>
</comment>
<comment type="similarity">
    <text evidence="1">Belongs to the TBP family.</text>
</comment>
<dbReference type="EMBL" id="AE017261">
    <property type="protein sequence ID" value="AAT43091.1"/>
    <property type="molecule type" value="Genomic_DNA"/>
</dbReference>
<dbReference type="RefSeq" id="WP_011177307.1">
    <property type="nucleotide sequence ID" value="NC_005877.1"/>
</dbReference>
<dbReference type="SMR" id="Q6L1R1"/>
<dbReference type="FunCoup" id="Q6L1R1">
    <property type="interactions" value="145"/>
</dbReference>
<dbReference type="STRING" id="263820.PTO0506"/>
<dbReference type="PaxDb" id="263820-PTO0506"/>
<dbReference type="GeneID" id="2845406"/>
<dbReference type="KEGG" id="pto:PTO0506"/>
<dbReference type="PATRIC" id="fig|263820.9.peg.533"/>
<dbReference type="eggNOG" id="arCOG01764">
    <property type="taxonomic scope" value="Archaea"/>
</dbReference>
<dbReference type="HOGENOM" id="CLU_060161_4_3_2"/>
<dbReference type="InParanoid" id="Q6L1R1"/>
<dbReference type="OrthoDB" id="350539at2157"/>
<dbReference type="Proteomes" id="UP000000438">
    <property type="component" value="Chromosome"/>
</dbReference>
<dbReference type="GO" id="GO:0003677">
    <property type="term" value="F:DNA binding"/>
    <property type="evidence" value="ECO:0007669"/>
    <property type="project" value="UniProtKB-KW"/>
</dbReference>
<dbReference type="GO" id="GO:0003700">
    <property type="term" value="F:DNA-binding transcription factor activity"/>
    <property type="evidence" value="ECO:0007669"/>
    <property type="project" value="UniProtKB-UniRule"/>
</dbReference>
<dbReference type="GO" id="GO:0006352">
    <property type="term" value="P:DNA-templated transcription initiation"/>
    <property type="evidence" value="ECO:0007669"/>
    <property type="project" value="InterPro"/>
</dbReference>
<dbReference type="CDD" id="cd04518">
    <property type="entry name" value="TBP_archaea"/>
    <property type="match status" value="1"/>
</dbReference>
<dbReference type="FunFam" id="3.30.310.10:FF:000007">
    <property type="entry name" value="TATA-box-binding protein"/>
    <property type="match status" value="1"/>
</dbReference>
<dbReference type="FunFam" id="3.30.310.10:FF:000010">
    <property type="entry name" value="TATA-box-binding protein"/>
    <property type="match status" value="1"/>
</dbReference>
<dbReference type="Gene3D" id="3.30.310.10">
    <property type="entry name" value="TATA-Binding Protein"/>
    <property type="match status" value="2"/>
</dbReference>
<dbReference type="HAMAP" id="MF_00408">
    <property type="entry name" value="TATA_bind_prot_arch"/>
    <property type="match status" value="1"/>
</dbReference>
<dbReference type="InterPro" id="IPR000814">
    <property type="entry name" value="TBP"/>
</dbReference>
<dbReference type="InterPro" id="IPR033711">
    <property type="entry name" value="TBP_archaea"/>
</dbReference>
<dbReference type="InterPro" id="IPR030491">
    <property type="entry name" value="TBP_CS"/>
</dbReference>
<dbReference type="InterPro" id="IPR012295">
    <property type="entry name" value="TBP_dom_sf"/>
</dbReference>
<dbReference type="NCBIfam" id="NF001593">
    <property type="entry name" value="PRK00394.1-2"/>
    <property type="match status" value="1"/>
</dbReference>
<dbReference type="NCBIfam" id="NF001597">
    <property type="entry name" value="PRK00394.2-2"/>
    <property type="match status" value="1"/>
</dbReference>
<dbReference type="NCBIfam" id="NF001598">
    <property type="entry name" value="PRK00394.2-3"/>
    <property type="match status" value="1"/>
</dbReference>
<dbReference type="PANTHER" id="PTHR10126">
    <property type="entry name" value="TATA-BOX BINDING PROTEIN"/>
    <property type="match status" value="1"/>
</dbReference>
<dbReference type="Pfam" id="PF00352">
    <property type="entry name" value="TBP"/>
    <property type="match status" value="2"/>
</dbReference>
<dbReference type="PRINTS" id="PR00686">
    <property type="entry name" value="TIFACTORIID"/>
</dbReference>
<dbReference type="SUPFAM" id="SSF55945">
    <property type="entry name" value="TATA-box binding protein-like"/>
    <property type="match status" value="2"/>
</dbReference>
<dbReference type="PROSITE" id="PS00351">
    <property type="entry name" value="TFIID"/>
    <property type="match status" value="1"/>
</dbReference>